<protein>
    <recommendedName>
        <fullName evidence="1">Peptidyl-tRNA hydrolase</fullName>
        <shortName evidence="1">Pth</shortName>
        <ecNumber evidence="1">3.1.1.29</ecNumber>
    </recommendedName>
</protein>
<dbReference type="EC" id="3.1.1.29" evidence="1"/>
<dbReference type="EMBL" id="CP001337">
    <property type="protein sequence ID" value="ACL25375.1"/>
    <property type="molecule type" value="Genomic_DNA"/>
</dbReference>
<dbReference type="RefSeq" id="WP_015941233.1">
    <property type="nucleotide sequence ID" value="NC_011831.1"/>
</dbReference>
<dbReference type="SMR" id="B8G3X3"/>
<dbReference type="STRING" id="326427.Cagg_2504"/>
<dbReference type="KEGG" id="cag:Cagg_2504"/>
<dbReference type="eggNOG" id="COG0193">
    <property type="taxonomic scope" value="Bacteria"/>
</dbReference>
<dbReference type="HOGENOM" id="CLU_062456_4_1_0"/>
<dbReference type="OrthoDB" id="9800507at2"/>
<dbReference type="Proteomes" id="UP000002508">
    <property type="component" value="Chromosome"/>
</dbReference>
<dbReference type="GO" id="GO:0005737">
    <property type="term" value="C:cytoplasm"/>
    <property type="evidence" value="ECO:0007669"/>
    <property type="project" value="UniProtKB-SubCell"/>
</dbReference>
<dbReference type="GO" id="GO:0004045">
    <property type="term" value="F:peptidyl-tRNA hydrolase activity"/>
    <property type="evidence" value="ECO:0007669"/>
    <property type="project" value="UniProtKB-UniRule"/>
</dbReference>
<dbReference type="GO" id="GO:0000049">
    <property type="term" value="F:tRNA binding"/>
    <property type="evidence" value="ECO:0007669"/>
    <property type="project" value="UniProtKB-UniRule"/>
</dbReference>
<dbReference type="GO" id="GO:0006515">
    <property type="term" value="P:protein quality control for misfolded or incompletely synthesized proteins"/>
    <property type="evidence" value="ECO:0007669"/>
    <property type="project" value="UniProtKB-UniRule"/>
</dbReference>
<dbReference type="GO" id="GO:0072344">
    <property type="term" value="P:rescue of stalled ribosome"/>
    <property type="evidence" value="ECO:0007669"/>
    <property type="project" value="UniProtKB-UniRule"/>
</dbReference>
<dbReference type="CDD" id="cd00462">
    <property type="entry name" value="PTH"/>
    <property type="match status" value="1"/>
</dbReference>
<dbReference type="FunFam" id="3.40.50.1470:FF:000001">
    <property type="entry name" value="Peptidyl-tRNA hydrolase"/>
    <property type="match status" value="1"/>
</dbReference>
<dbReference type="Gene3D" id="3.40.50.1470">
    <property type="entry name" value="Peptidyl-tRNA hydrolase"/>
    <property type="match status" value="1"/>
</dbReference>
<dbReference type="HAMAP" id="MF_00083">
    <property type="entry name" value="Pept_tRNA_hydro_bact"/>
    <property type="match status" value="1"/>
</dbReference>
<dbReference type="InterPro" id="IPR001328">
    <property type="entry name" value="Pept_tRNA_hydro"/>
</dbReference>
<dbReference type="InterPro" id="IPR018171">
    <property type="entry name" value="Pept_tRNA_hydro_CS"/>
</dbReference>
<dbReference type="InterPro" id="IPR036416">
    <property type="entry name" value="Pept_tRNA_hydro_sf"/>
</dbReference>
<dbReference type="NCBIfam" id="TIGR00447">
    <property type="entry name" value="pth"/>
    <property type="match status" value="1"/>
</dbReference>
<dbReference type="PANTHER" id="PTHR17224">
    <property type="entry name" value="PEPTIDYL-TRNA HYDROLASE"/>
    <property type="match status" value="1"/>
</dbReference>
<dbReference type="PANTHER" id="PTHR17224:SF1">
    <property type="entry name" value="PEPTIDYL-TRNA HYDROLASE"/>
    <property type="match status" value="1"/>
</dbReference>
<dbReference type="Pfam" id="PF01195">
    <property type="entry name" value="Pept_tRNA_hydro"/>
    <property type="match status" value="1"/>
</dbReference>
<dbReference type="SUPFAM" id="SSF53178">
    <property type="entry name" value="Peptidyl-tRNA hydrolase-like"/>
    <property type="match status" value="1"/>
</dbReference>
<dbReference type="PROSITE" id="PS01196">
    <property type="entry name" value="PEPT_TRNA_HYDROL_2"/>
    <property type="match status" value="1"/>
</dbReference>
<evidence type="ECO:0000255" key="1">
    <source>
        <dbReference type="HAMAP-Rule" id="MF_00083"/>
    </source>
</evidence>
<feature type="chain" id="PRO_1000118382" description="Peptidyl-tRNA hydrolase">
    <location>
        <begin position="1"/>
        <end position="188"/>
    </location>
</feature>
<feature type="active site" description="Proton acceptor" evidence="1">
    <location>
        <position position="19"/>
    </location>
</feature>
<feature type="binding site" evidence="1">
    <location>
        <position position="14"/>
    </location>
    <ligand>
        <name>tRNA</name>
        <dbReference type="ChEBI" id="CHEBI:17843"/>
    </ligand>
</feature>
<feature type="binding site" evidence="1">
    <location>
        <position position="64"/>
    </location>
    <ligand>
        <name>tRNA</name>
        <dbReference type="ChEBI" id="CHEBI:17843"/>
    </ligand>
</feature>
<feature type="binding site" evidence="1">
    <location>
        <position position="66"/>
    </location>
    <ligand>
        <name>tRNA</name>
        <dbReference type="ChEBI" id="CHEBI:17843"/>
    </ligand>
</feature>
<feature type="binding site" evidence="1">
    <location>
        <position position="113"/>
    </location>
    <ligand>
        <name>tRNA</name>
        <dbReference type="ChEBI" id="CHEBI:17843"/>
    </ligand>
</feature>
<feature type="site" description="Discriminates between blocked and unblocked aminoacyl-tRNA" evidence="1">
    <location>
        <position position="9"/>
    </location>
</feature>
<feature type="site" description="Stabilizes the basic form of H active site to accept a proton" evidence="1">
    <location>
        <position position="92"/>
    </location>
</feature>
<proteinExistence type="inferred from homology"/>
<accession>B8G3X3</accession>
<sequence length="188" mass="20939">MWLIVGLGNPGERYARTRHNIGFRSVETLAERHGLTFRNQRAKSEIAEGIIRGQRVALVKPQTYMNLSGQAVAALRQWYKIDPARELLVIYDDLDLPFAKLRLRERGSAGTHNGMRSIVGQLGTTEFPRLRIGIGQPPGQMDAADYVLSRFTPEEEAVLPEVLARVADAVEVVVSEGLTAAMNRYNPL</sequence>
<reference key="1">
    <citation type="submission" date="2008-12" db="EMBL/GenBank/DDBJ databases">
        <title>Complete sequence of Chloroflexus aggregans DSM 9485.</title>
        <authorList>
            <consortium name="US DOE Joint Genome Institute"/>
            <person name="Lucas S."/>
            <person name="Copeland A."/>
            <person name="Lapidus A."/>
            <person name="Glavina del Rio T."/>
            <person name="Dalin E."/>
            <person name="Tice H."/>
            <person name="Pitluck S."/>
            <person name="Foster B."/>
            <person name="Larimer F."/>
            <person name="Land M."/>
            <person name="Hauser L."/>
            <person name="Kyrpides N."/>
            <person name="Mikhailova N."/>
            <person name="Bryant D.A."/>
            <person name="Richardson P."/>
        </authorList>
    </citation>
    <scope>NUCLEOTIDE SEQUENCE [LARGE SCALE GENOMIC DNA]</scope>
    <source>
        <strain>MD-66 / DSM 9485</strain>
    </source>
</reference>
<organism>
    <name type="scientific">Chloroflexus aggregans (strain MD-66 / DSM 9485)</name>
    <dbReference type="NCBI Taxonomy" id="326427"/>
    <lineage>
        <taxon>Bacteria</taxon>
        <taxon>Bacillati</taxon>
        <taxon>Chloroflexota</taxon>
        <taxon>Chloroflexia</taxon>
        <taxon>Chloroflexales</taxon>
        <taxon>Chloroflexineae</taxon>
        <taxon>Chloroflexaceae</taxon>
        <taxon>Chloroflexus</taxon>
    </lineage>
</organism>
<keyword id="KW-0963">Cytoplasm</keyword>
<keyword id="KW-0378">Hydrolase</keyword>
<keyword id="KW-0694">RNA-binding</keyword>
<keyword id="KW-0820">tRNA-binding</keyword>
<gene>
    <name evidence="1" type="primary">pth</name>
    <name type="ordered locus">Cagg_2504</name>
</gene>
<name>PTH_CHLAD</name>
<comment type="function">
    <text evidence="1">Hydrolyzes ribosome-free peptidyl-tRNAs (with 1 or more amino acids incorporated), which drop off the ribosome during protein synthesis, or as a result of ribosome stalling.</text>
</comment>
<comment type="function">
    <text evidence="1">Catalyzes the release of premature peptidyl moieties from peptidyl-tRNA molecules trapped in stalled 50S ribosomal subunits, and thus maintains levels of free tRNAs and 50S ribosomes.</text>
</comment>
<comment type="catalytic activity">
    <reaction evidence="1">
        <text>an N-acyl-L-alpha-aminoacyl-tRNA + H2O = an N-acyl-L-amino acid + a tRNA + H(+)</text>
        <dbReference type="Rhea" id="RHEA:54448"/>
        <dbReference type="Rhea" id="RHEA-COMP:10123"/>
        <dbReference type="Rhea" id="RHEA-COMP:13883"/>
        <dbReference type="ChEBI" id="CHEBI:15377"/>
        <dbReference type="ChEBI" id="CHEBI:15378"/>
        <dbReference type="ChEBI" id="CHEBI:59874"/>
        <dbReference type="ChEBI" id="CHEBI:78442"/>
        <dbReference type="ChEBI" id="CHEBI:138191"/>
        <dbReference type="EC" id="3.1.1.29"/>
    </reaction>
</comment>
<comment type="subunit">
    <text evidence="1">Monomer.</text>
</comment>
<comment type="subcellular location">
    <subcellularLocation>
        <location evidence="1">Cytoplasm</location>
    </subcellularLocation>
</comment>
<comment type="similarity">
    <text evidence="1">Belongs to the PTH family.</text>
</comment>